<keyword id="KW-0001">2Fe-2S</keyword>
<keyword id="KW-0028">Amino-acid biosynthesis</keyword>
<keyword id="KW-0100">Branched-chain amino acid biosynthesis</keyword>
<keyword id="KW-0408">Iron</keyword>
<keyword id="KW-0411">Iron-sulfur</keyword>
<keyword id="KW-0456">Lyase</keyword>
<keyword id="KW-0460">Magnesium</keyword>
<keyword id="KW-0479">Metal-binding</keyword>
<reference key="1">
    <citation type="journal article" date="2007" name="Nat. Genet.">
        <title>Genomic analysis of Bartonella identifies type IV secretion systems as host adaptability factors.</title>
        <authorList>
            <person name="Saenz H.L."/>
            <person name="Engel P."/>
            <person name="Stoeckli M.C."/>
            <person name="Lanz C."/>
            <person name="Raddatz G."/>
            <person name="Vayssier-Taussat M."/>
            <person name="Birtles R."/>
            <person name="Schuster S.C."/>
            <person name="Dehio C."/>
        </authorList>
    </citation>
    <scope>NUCLEOTIDE SEQUENCE [LARGE SCALE GENOMIC DNA]</scope>
    <source>
        <strain>CIP 105476 / IBS 506</strain>
    </source>
</reference>
<name>ILVD_BART1</name>
<sequence>MPSYRSRISTHGRNMAGARGLWRATGMKDADFGKPIIAIANSFTQFVPGHVHLKDLGQLVAQQIEIAGGVAKEFNTIAVDDGIAMGHDGMLYSLPSREIIADSVEYMVNAHCADALVCISNCDKITPGMLMAALRLNIPTIFVSGGPMEAGKIKWKDQDLRVDLVDAMIAAASEHNSEEEVAEMERAACPTCGSCSGMFTANSMNCLTEALGLSLPGNGSVLATHRDRRMLFEEAGRQIVALVKRYYEKDDETVLPRSIASRKAFENAMTVDIAMGGSTNTVLHLLAAAQEGEVDFTMTDIDHLSRRVPVLCKVAPAVANVHMEDVHRAGGIMGLLGELDAAGLIDTSTYTVHAKTMKEALDHWDIKQTNEPTVCAFYRAAPGGIPTQRAFSQSCRYETLDLDRAKGVIRDKEHAYSQDGGLAVLYGNLAKDGCIVKTAGVDQSILTFKGPARIFESQDSAVSAILNDKIKTGEIVLIRYEGPRGGPGMQEMLYPTSYLKSKGLGKVCALVTDGRFSGGSSGLSIGHVSPEAAEGGEIALVEEGDIIEIDIPNRSIHMLVDDVEMKQRRAKMAAKGNGAWQPIEKRQRKVSKALKAYAAMTTSAAKGAVRNI</sequence>
<accession>A9ILS3</accession>
<protein>
    <recommendedName>
        <fullName evidence="1">Dihydroxy-acid dehydratase</fullName>
        <shortName evidence="1">DAD</shortName>
        <ecNumber evidence="1">4.2.1.9</ecNumber>
    </recommendedName>
</protein>
<gene>
    <name evidence="1" type="primary">ilvD</name>
    <name type="ordered locus">BT_0106</name>
</gene>
<organism>
    <name type="scientific">Bartonella tribocorum (strain CIP 105476 / IBS 506)</name>
    <dbReference type="NCBI Taxonomy" id="382640"/>
    <lineage>
        <taxon>Bacteria</taxon>
        <taxon>Pseudomonadati</taxon>
        <taxon>Pseudomonadota</taxon>
        <taxon>Alphaproteobacteria</taxon>
        <taxon>Hyphomicrobiales</taxon>
        <taxon>Bartonellaceae</taxon>
        <taxon>Bartonella</taxon>
    </lineage>
</organism>
<comment type="function">
    <text evidence="1">Functions in the biosynthesis of branched-chain amino acids. Catalyzes the dehydration of (2R,3R)-2,3-dihydroxy-3-methylpentanoate (2,3-dihydroxy-3-methylvalerate) into 2-oxo-3-methylpentanoate (2-oxo-3-methylvalerate) and of (2R)-2,3-dihydroxy-3-methylbutanoate (2,3-dihydroxyisovalerate) into 2-oxo-3-methylbutanoate (2-oxoisovalerate), the penultimate precursor to L-isoleucine and L-valine, respectively.</text>
</comment>
<comment type="catalytic activity">
    <reaction evidence="1">
        <text>(2R)-2,3-dihydroxy-3-methylbutanoate = 3-methyl-2-oxobutanoate + H2O</text>
        <dbReference type="Rhea" id="RHEA:24809"/>
        <dbReference type="ChEBI" id="CHEBI:11851"/>
        <dbReference type="ChEBI" id="CHEBI:15377"/>
        <dbReference type="ChEBI" id="CHEBI:49072"/>
        <dbReference type="EC" id="4.2.1.9"/>
    </reaction>
    <physiologicalReaction direction="left-to-right" evidence="1">
        <dbReference type="Rhea" id="RHEA:24810"/>
    </physiologicalReaction>
</comment>
<comment type="catalytic activity">
    <reaction evidence="1">
        <text>(2R,3R)-2,3-dihydroxy-3-methylpentanoate = (S)-3-methyl-2-oxopentanoate + H2O</text>
        <dbReference type="Rhea" id="RHEA:27694"/>
        <dbReference type="ChEBI" id="CHEBI:15377"/>
        <dbReference type="ChEBI" id="CHEBI:35146"/>
        <dbReference type="ChEBI" id="CHEBI:49258"/>
        <dbReference type="EC" id="4.2.1.9"/>
    </reaction>
    <physiologicalReaction direction="left-to-right" evidence="1">
        <dbReference type="Rhea" id="RHEA:27695"/>
    </physiologicalReaction>
</comment>
<comment type="cofactor">
    <cofactor evidence="1">
        <name>[2Fe-2S] cluster</name>
        <dbReference type="ChEBI" id="CHEBI:190135"/>
    </cofactor>
    <text evidence="1">Binds 1 [2Fe-2S] cluster per subunit. This cluster acts as a Lewis acid cofactor.</text>
</comment>
<comment type="cofactor">
    <cofactor evidence="1">
        <name>Mg(2+)</name>
        <dbReference type="ChEBI" id="CHEBI:18420"/>
    </cofactor>
</comment>
<comment type="pathway">
    <text evidence="1">Amino-acid biosynthesis; L-isoleucine biosynthesis; L-isoleucine from 2-oxobutanoate: step 3/4.</text>
</comment>
<comment type="pathway">
    <text evidence="1">Amino-acid biosynthesis; L-valine biosynthesis; L-valine from pyruvate: step 3/4.</text>
</comment>
<comment type="subunit">
    <text evidence="1">Homodimer.</text>
</comment>
<comment type="similarity">
    <text evidence="1">Belongs to the IlvD/Edd family.</text>
</comment>
<feature type="chain" id="PRO_1000073966" description="Dihydroxy-acid dehydratase">
    <location>
        <begin position="1"/>
        <end position="612"/>
    </location>
</feature>
<feature type="active site" description="Proton acceptor" evidence="1">
    <location>
        <position position="517"/>
    </location>
</feature>
<feature type="binding site" evidence="1">
    <location>
        <position position="81"/>
    </location>
    <ligand>
        <name>Mg(2+)</name>
        <dbReference type="ChEBI" id="CHEBI:18420"/>
    </ligand>
</feature>
<feature type="binding site" evidence="1">
    <location>
        <position position="122"/>
    </location>
    <ligand>
        <name>[2Fe-2S] cluster</name>
        <dbReference type="ChEBI" id="CHEBI:190135"/>
    </ligand>
</feature>
<feature type="binding site" evidence="1">
    <location>
        <position position="123"/>
    </location>
    <ligand>
        <name>Mg(2+)</name>
        <dbReference type="ChEBI" id="CHEBI:18420"/>
    </ligand>
</feature>
<feature type="binding site" description="via carbamate group" evidence="1">
    <location>
        <position position="124"/>
    </location>
    <ligand>
        <name>Mg(2+)</name>
        <dbReference type="ChEBI" id="CHEBI:18420"/>
    </ligand>
</feature>
<feature type="binding site" evidence="1">
    <location>
        <position position="195"/>
    </location>
    <ligand>
        <name>[2Fe-2S] cluster</name>
        <dbReference type="ChEBI" id="CHEBI:190135"/>
    </ligand>
</feature>
<feature type="binding site" evidence="1">
    <location>
        <position position="491"/>
    </location>
    <ligand>
        <name>Mg(2+)</name>
        <dbReference type="ChEBI" id="CHEBI:18420"/>
    </ligand>
</feature>
<feature type="modified residue" description="N6-carboxylysine" evidence="1">
    <location>
        <position position="124"/>
    </location>
</feature>
<proteinExistence type="inferred from homology"/>
<dbReference type="EC" id="4.2.1.9" evidence="1"/>
<dbReference type="EMBL" id="AM260525">
    <property type="protein sequence ID" value="CAK00596.1"/>
    <property type="molecule type" value="Genomic_DNA"/>
</dbReference>
<dbReference type="RefSeq" id="WP_012230426.1">
    <property type="nucleotide sequence ID" value="NC_010161.1"/>
</dbReference>
<dbReference type="SMR" id="A9ILS3"/>
<dbReference type="KEGG" id="btr:BT_0106"/>
<dbReference type="eggNOG" id="COG0129">
    <property type="taxonomic scope" value="Bacteria"/>
</dbReference>
<dbReference type="HOGENOM" id="CLU_014271_4_2_5"/>
<dbReference type="UniPathway" id="UPA00047">
    <property type="reaction ID" value="UER00057"/>
</dbReference>
<dbReference type="UniPathway" id="UPA00049">
    <property type="reaction ID" value="UER00061"/>
</dbReference>
<dbReference type="Proteomes" id="UP000001592">
    <property type="component" value="Chromosome"/>
</dbReference>
<dbReference type="GO" id="GO:0005829">
    <property type="term" value="C:cytosol"/>
    <property type="evidence" value="ECO:0007669"/>
    <property type="project" value="TreeGrafter"/>
</dbReference>
<dbReference type="GO" id="GO:0051537">
    <property type="term" value="F:2 iron, 2 sulfur cluster binding"/>
    <property type="evidence" value="ECO:0007669"/>
    <property type="project" value="UniProtKB-UniRule"/>
</dbReference>
<dbReference type="GO" id="GO:0004160">
    <property type="term" value="F:dihydroxy-acid dehydratase activity"/>
    <property type="evidence" value="ECO:0007669"/>
    <property type="project" value="UniProtKB-UniRule"/>
</dbReference>
<dbReference type="GO" id="GO:0000287">
    <property type="term" value="F:magnesium ion binding"/>
    <property type="evidence" value="ECO:0007669"/>
    <property type="project" value="UniProtKB-UniRule"/>
</dbReference>
<dbReference type="GO" id="GO:0009097">
    <property type="term" value="P:isoleucine biosynthetic process"/>
    <property type="evidence" value="ECO:0007669"/>
    <property type="project" value="UniProtKB-UniRule"/>
</dbReference>
<dbReference type="GO" id="GO:0009099">
    <property type="term" value="P:L-valine biosynthetic process"/>
    <property type="evidence" value="ECO:0007669"/>
    <property type="project" value="UniProtKB-UniRule"/>
</dbReference>
<dbReference type="FunFam" id="3.50.30.80:FF:000001">
    <property type="entry name" value="Dihydroxy-acid dehydratase"/>
    <property type="match status" value="1"/>
</dbReference>
<dbReference type="Gene3D" id="3.50.30.80">
    <property type="entry name" value="IlvD/EDD C-terminal domain-like"/>
    <property type="match status" value="1"/>
</dbReference>
<dbReference type="HAMAP" id="MF_00012">
    <property type="entry name" value="IlvD"/>
    <property type="match status" value="1"/>
</dbReference>
<dbReference type="InterPro" id="IPR042096">
    <property type="entry name" value="Dihydro-acid_dehy_C"/>
</dbReference>
<dbReference type="InterPro" id="IPR004404">
    <property type="entry name" value="DihydroxyA_deHydtase"/>
</dbReference>
<dbReference type="InterPro" id="IPR020558">
    <property type="entry name" value="DiOHA_6PGluconate_deHydtase_CS"/>
</dbReference>
<dbReference type="InterPro" id="IPR056740">
    <property type="entry name" value="ILV_EDD_C"/>
</dbReference>
<dbReference type="InterPro" id="IPR000581">
    <property type="entry name" value="ILV_EDD_N"/>
</dbReference>
<dbReference type="InterPro" id="IPR037237">
    <property type="entry name" value="IlvD/EDD_N"/>
</dbReference>
<dbReference type="NCBIfam" id="TIGR00110">
    <property type="entry name" value="ilvD"/>
    <property type="match status" value="1"/>
</dbReference>
<dbReference type="NCBIfam" id="NF009103">
    <property type="entry name" value="PRK12448.1"/>
    <property type="match status" value="1"/>
</dbReference>
<dbReference type="PANTHER" id="PTHR43661">
    <property type="entry name" value="D-XYLONATE DEHYDRATASE"/>
    <property type="match status" value="1"/>
</dbReference>
<dbReference type="PANTHER" id="PTHR43661:SF3">
    <property type="entry name" value="D-XYLONATE DEHYDRATASE YAGF-RELATED"/>
    <property type="match status" value="1"/>
</dbReference>
<dbReference type="Pfam" id="PF24877">
    <property type="entry name" value="ILV_EDD_C"/>
    <property type="match status" value="1"/>
</dbReference>
<dbReference type="Pfam" id="PF00920">
    <property type="entry name" value="ILVD_EDD_N"/>
    <property type="match status" value="1"/>
</dbReference>
<dbReference type="SUPFAM" id="SSF143975">
    <property type="entry name" value="IlvD/EDD N-terminal domain-like"/>
    <property type="match status" value="1"/>
</dbReference>
<dbReference type="SUPFAM" id="SSF52016">
    <property type="entry name" value="LeuD/IlvD-like"/>
    <property type="match status" value="1"/>
</dbReference>
<dbReference type="PROSITE" id="PS00886">
    <property type="entry name" value="ILVD_EDD_1"/>
    <property type="match status" value="1"/>
</dbReference>
<dbReference type="PROSITE" id="PS00887">
    <property type="entry name" value="ILVD_EDD_2"/>
    <property type="match status" value="1"/>
</dbReference>
<evidence type="ECO:0000255" key="1">
    <source>
        <dbReference type="HAMAP-Rule" id="MF_00012"/>
    </source>
</evidence>